<dbReference type="EMBL" id="M75136">
    <property type="protein sequence ID" value="AAA88178.1"/>
    <property type="molecule type" value="Genomic_DNA"/>
</dbReference>
<dbReference type="PIR" id="B36794">
    <property type="entry name" value="B36794"/>
</dbReference>
<dbReference type="RefSeq" id="NP_041166.1">
    <property type="nucleotide sequence ID" value="NC_001493.2"/>
</dbReference>
<dbReference type="SMR" id="Q00150"/>
<dbReference type="GeneID" id="1488366"/>
<dbReference type="KEGG" id="vg:1488366"/>
<dbReference type="Proteomes" id="UP000007643">
    <property type="component" value="Segment"/>
</dbReference>
<dbReference type="Gene3D" id="3.40.50.300">
    <property type="entry name" value="P-loop containing nucleotide triphosphate hydrolases"/>
    <property type="match status" value="1"/>
</dbReference>
<dbReference type="InterPro" id="IPR027417">
    <property type="entry name" value="P-loop_NTPase"/>
</dbReference>
<gene>
    <name type="primary">ORF76</name>
</gene>
<sequence length="241" mass="27261">MDRHRYLSILTPELVAGVVPAAYELFMTERRGSIAIIPPVDRSDESRVESIIRAHGRPIIAFAGRMGSGKDHACDYFCERFGAIKLHIFESGLRRIGLFYGRAIDKSIDRSVLQAVGELGRRLRPQFWLQMTFEEDLLRILDRDRPVVITGVRYKTDVRYLATLGVRTFIIRRPGLVLAGTPEESDPSERDLDDYHECAELINRGTVGDFDALLAETARDISLSELVPVTDTGRECPRIFP</sequence>
<protein>
    <recommendedName>
        <fullName>Uncharacterized protein ORF76</fullName>
    </recommendedName>
</protein>
<keyword id="KW-1185">Reference proteome</keyword>
<accession>Q00150</accession>
<organismHost>
    <name type="scientific">Ictaluridae</name>
    <name type="common">bullhead catfishes</name>
    <dbReference type="NCBI Taxonomy" id="7996"/>
</organismHost>
<reference key="1">
    <citation type="journal article" date="1992" name="Virology">
        <title>Channel catfish virus: a new type of herpesvirus.</title>
        <authorList>
            <person name="Davison A.J."/>
        </authorList>
    </citation>
    <scope>NUCLEOTIDE SEQUENCE [LARGE SCALE GENOMIC DNA]</scope>
</reference>
<organism>
    <name type="scientific">Ictalurid herpesvirus 1 (strain Auburn)</name>
    <name type="common">IcHV-1</name>
    <name type="synonym">Channel catfish herpesvirus</name>
    <dbReference type="NCBI Taxonomy" id="766178"/>
    <lineage>
        <taxon>Viruses</taxon>
        <taxon>Duplodnaviria</taxon>
        <taxon>Heunggongvirae</taxon>
        <taxon>Peploviricota</taxon>
        <taxon>Herviviricetes</taxon>
        <taxon>Herpesvirales</taxon>
        <taxon>Alloherpesviridae</taxon>
        <taxon>Ictavirus</taxon>
        <taxon>Ictavirus ictaluridallo1</taxon>
        <taxon>Ictalurid herpesvirus 1</taxon>
    </lineage>
</organism>
<feature type="chain" id="PRO_0000222150" description="Uncharacterized protein ORF76">
    <location>
        <begin position="1"/>
        <end position="241"/>
    </location>
</feature>
<proteinExistence type="predicted"/>
<name>VG76_ICHVA</name>